<sequence>MSKVQVKKVVVAYSGGLDTSVIIPWLKENYDCEVVAFVADVGQGDEELKGVEAKALSSGASECYIVDLKEEFVKEYIYPTLKTGAYYEGKYLLGTSMARPVIAKAQVEIARKVGADALAHGCTGKGNDQVRFEGAFAALAPDLHVIAPWREWDLRSREACLDYLAERNIPCAASLTKIYSRDANAWHVSTEGGVLESTWNAPNEDCWVWTVDPEQAPNEAEYVTLQVAHGEVVAVDGEAMTPYNALLYLNQKGAKHGVGRIDIVENRLVGMKSRGCYETPGGTIIMEALRAVEQLVLDKTSFEFREELGIKASHLVYDGRWFTPLRQAVFAAADELAKDVNGEVVIKLYKGQAVATQKRSANSLYSEDFATFGADEVYDHSHAGGFIRLYSLSSRIRALSQNKQ</sequence>
<feature type="chain" id="PRO_0000148660" description="Argininosuccinate synthase">
    <location>
        <begin position="1"/>
        <end position="404"/>
    </location>
</feature>
<feature type="binding site" evidence="1">
    <location>
        <begin position="12"/>
        <end position="20"/>
    </location>
    <ligand>
        <name>ATP</name>
        <dbReference type="ChEBI" id="CHEBI:30616"/>
    </ligand>
</feature>
<feature type="binding site" evidence="1">
    <location>
        <position position="39"/>
    </location>
    <ligand>
        <name>ATP</name>
        <dbReference type="ChEBI" id="CHEBI:30616"/>
    </ligand>
</feature>
<feature type="binding site" evidence="1">
    <location>
        <position position="91"/>
    </location>
    <ligand>
        <name>L-citrulline</name>
        <dbReference type="ChEBI" id="CHEBI:57743"/>
    </ligand>
</feature>
<feature type="binding site" evidence="1">
    <location>
        <position position="96"/>
    </location>
    <ligand>
        <name>L-citrulline</name>
        <dbReference type="ChEBI" id="CHEBI:57743"/>
    </ligand>
</feature>
<feature type="binding site" evidence="1">
    <location>
        <position position="121"/>
    </location>
    <ligand>
        <name>ATP</name>
        <dbReference type="ChEBI" id="CHEBI:30616"/>
    </ligand>
</feature>
<feature type="binding site" evidence="1">
    <location>
        <position position="123"/>
    </location>
    <ligand>
        <name>L-aspartate</name>
        <dbReference type="ChEBI" id="CHEBI:29991"/>
    </ligand>
</feature>
<feature type="binding site" evidence="1">
    <location>
        <position position="127"/>
    </location>
    <ligand>
        <name>L-aspartate</name>
        <dbReference type="ChEBI" id="CHEBI:29991"/>
    </ligand>
</feature>
<feature type="binding site" evidence="1">
    <location>
        <position position="127"/>
    </location>
    <ligand>
        <name>L-citrulline</name>
        <dbReference type="ChEBI" id="CHEBI:57743"/>
    </ligand>
</feature>
<feature type="binding site" evidence="1">
    <location>
        <position position="128"/>
    </location>
    <ligand>
        <name>L-aspartate</name>
        <dbReference type="ChEBI" id="CHEBI:29991"/>
    </ligand>
</feature>
<feature type="binding site" evidence="1">
    <location>
        <position position="131"/>
    </location>
    <ligand>
        <name>L-citrulline</name>
        <dbReference type="ChEBI" id="CHEBI:57743"/>
    </ligand>
</feature>
<feature type="binding site" evidence="1">
    <location>
        <position position="180"/>
    </location>
    <ligand>
        <name>L-citrulline</name>
        <dbReference type="ChEBI" id="CHEBI:57743"/>
    </ligand>
</feature>
<feature type="binding site" evidence="1">
    <location>
        <position position="189"/>
    </location>
    <ligand>
        <name>L-citrulline</name>
        <dbReference type="ChEBI" id="CHEBI:57743"/>
    </ligand>
</feature>
<feature type="binding site" evidence="1">
    <location>
        <position position="265"/>
    </location>
    <ligand>
        <name>L-citrulline</name>
        <dbReference type="ChEBI" id="CHEBI:57743"/>
    </ligand>
</feature>
<feature type="binding site" evidence="1">
    <location>
        <position position="277"/>
    </location>
    <ligand>
        <name>L-citrulline</name>
        <dbReference type="ChEBI" id="CHEBI:57743"/>
    </ligand>
</feature>
<accession>Q9KNT8</accession>
<proteinExistence type="inferred from homology"/>
<organism>
    <name type="scientific">Vibrio cholerae serotype O1 (strain ATCC 39315 / El Tor Inaba N16961)</name>
    <dbReference type="NCBI Taxonomy" id="243277"/>
    <lineage>
        <taxon>Bacteria</taxon>
        <taxon>Pseudomonadati</taxon>
        <taxon>Pseudomonadota</taxon>
        <taxon>Gammaproteobacteria</taxon>
        <taxon>Vibrionales</taxon>
        <taxon>Vibrionaceae</taxon>
        <taxon>Vibrio</taxon>
    </lineage>
</organism>
<name>ASSY_VIBCH</name>
<keyword id="KW-0028">Amino-acid biosynthesis</keyword>
<keyword id="KW-0055">Arginine biosynthesis</keyword>
<keyword id="KW-0067">ATP-binding</keyword>
<keyword id="KW-0963">Cytoplasm</keyword>
<keyword id="KW-0436">Ligase</keyword>
<keyword id="KW-0547">Nucleotide-binding</keyword>
<keyword id="KW-1185">Reference proteome</keyword>
<protein>
    <recommendedName>
        <fullName evidence="1">Argininosuccinate synthase</fullName>
        <ecNumber evidence="1">6.3.4.5</ecNumber>
    </recommendedName>
    <alternativeName>
        <fullName evidence="1">Citrulline--aspartate ligase</fullName>
    </alternativeName>
</protein>
<gene>
    <name evidence="1" type="primary">argG</name>
    <name type="ordered locus">VC_2642</name>
</gene>
<dbReference type="EC" id="6.3.4.5" evidence="1"/>
<dbReference type="EMBL" id="AE003852">
    <property type="protein sequence ID" value="AAF95783.1"/>
    <property type="molecule type" value="Genomic_DNA"/>
</dbReference>
<dbReference type="PIR" id="A82052">
    <property type="entry name" value="A82052"/>
</dbReference>
<dbReference type="RefSeq" id="NP_232270.1">
    <property type="nucleotide sequence ID" value="NC_002505.1"/>
</dbReference>
<dbReference type="RefSeq" id="WP_000049171.1">
    <property type="nucleotide sequence ID" value="NZ_LT906614.1"/>
</dbReference>
<dbReference type="SMR" id="Q9KNT8"/>
<dbReference type="STRING" id="243277.VC_2642"/>
<dbReference type="DNASU" id="2615659"/>
<dbReference type="EnsemblBacteria" id="AAF95783">
    <property type="protein sequence ID" value="AAF95783"/>
    <property type="gene ID" value="VC_2642"/>
</dbReference>
<dbReference type="KEGG" id="vch:VC_2642"/>
<dbReference type="PATRIC" id="fig|243277.26.peg.2520"/>
<dbReference type="eggNOG" id="COG0137">
    <property type="taxonomic scope" value="Bacteria"/>
</dbReference>
<dbReference type="HOGENOM" id="CLU_032784_4_2_6"/>
<dbReference type="UniPathway" id="UPA00068">
    <property type="reaction ID" value="UER00113"/>
</dbReference>
<dbReference type="Proteomes" id="UP000000584">
    <property type="component" value="Chromosome 1"/>
</dbReference>
<dbReference type="GO" id="GO:0005737">
    <property type="term" value="C:cytoplasm"/>
    <property type="evidence" value="ECO:0000318"/>
    <property type="project" value="GO_Central"/>
</dbReference>
<dbReference type="GO" id="GO:0004055">
    <property type="term" value="F:argininosuccinate synthase activity"/>
    <property type="evidence" value="ECO:0000318"/>
    <property type="project" value="GO_Central"/>
</dbReference>
<dbReference type="GO" id="GO:0005524">
    <property type="term" value="F:ATP binding"/>
    <property type="evidence" value="ECO:0007669"/>
    <property type="project" value="UniProtKB-UniRule"/>
</dbReference>
<dbReference type="GO" id="GO:0000053">
    <property type="term" value="P:argininosuccinate metabolic process"/>
    <property type="evidence" value="ECO:0000318"/>
    <property type="project" value="GO_Central"/>
</dbReference>
<dbReference type="GO" id="GO:0006526">
    <property type="term" value="P:L-arginine biosynthetic process"/>
    <property type="evidence" value="ECO:0000318"/>
    <property type="project" value="GO_Central"/>
</dbReference>
<dbReference type="GO" id="GO:0000050">
    <property type="term" value="P:urea cycle"/>
    <property type="evidence" value="ECO:0000318"/>
    <property type="project" value="GO_Central"/>
</dbReference>
<dbReference type="CDD" id="cd01999">
    <property type="entry name" value="ASS"/>
    <property type="match status" value="1"/>
</dbReference>
<dbReference type="FunFam" id="3.40.50.620:FF:000019">
    <property type="entry name" value="Argininosuccinate synthase"/>
    <property type="match status" value="1"/>
</dbReference>
<dbReference type="FunFam" id="3.90.1260.10:FF:000007">
    <property type="entry name" value="Argininosuccinate synthase"/>
    <property type="match status" value="1"/>
</dbReference>
<dbReference type="Gene3D" id="3.90.1260.10">
    <property type="entry name" value="Argininosuccinate synthetase, chain A, domain 2"/>
    <property type="match status" value="1"/>
</dbReference>
<dbReference type="Gene3D" id="3.40.50.620">
    <property type="entry name" value="HUPs"/>
    <property type="match status" value="1"/>
</dbReference>
<dbReference type="Gene3D" id="1.20.5.470">
    <property type="entry name" value="Single helix bin"/>
    <property type="match status" value="1"/>
</dbReference>
<dbReference type="HAMAP" id="MF_00005">
    <property type="entry name" value="Arg_succ_synth_type1"/>
    <property type="match status" value="1"/>
</dbReference>
<dbReference type="InterPro" id="IPR048268">
    <property type="entry name" value="Arginosuc_syn_C"/>
</dbReference>
<dbReference type="InterPro" id="IPR048267">
    <property type="entry name" value="Arginosuc_syn_N"/>
</dbReference>
<dbReference type="InterPro" id="IPR001518">
    <property type="entry name" value="Arginosuc_synth"/>
</dbReference>
<dbReference type="InterPro" id="IPR018223">
    <property type="entry name" value="Arginosuc_synth_CS"/>
</dbReference>
<dbReference type="InterPro" id="IPR023434">
    <property type="entry name" value="Arginosuc_synth_type_1_subfam"/>
</dbReference>
<dbReference type="InterPro" id="IPR024074">
    <property type="entry name" value="AS_cat/multimer_dom_body"/>
</dbReference>
<dbReference type="InterPro" id="IPR014729">
    <property type="entry name" value="Rossmann-like_a/b/a_fold"/>
</dbReference>
<dbReference type="NCBIfam" id="TIGR00032">
    <property type="entry name" value="argG"/>
    <property type="match status" value="1"/>
</dbReference>
<dbReference type="NCBIfam" id="NF001770">
    <property type="entry name" value="PRK00509.1"/>
    <property type="match status" value="1"/>
</dbReference>
<dbReference type="PANTHER" id="PTHR11587">
    <property type="entry name" value="ARGININOSUCCINATE SYNTHASE"/>
    <property type="match status" value="1"/>
</dbReference>
<dbReference type="PANTHER" id="PTHR11587:SF2">
    <property type="entry name" value="ARGININOSUCCINATE SYNTHASE"/>
    <property type="match status" value="1"/>
</dbReference>
<dbReference type="Pfam" id="PF20979">
    <property type="entry name" value="Arginosuc_syn_C"/>
    <property type="match status" value="1"/>
</dbReference>
<dbReference type="Pfam" id="PF00764">
    <property type="entry name" value="Arginosuc_synth"/>
    <property type="match status" value="1"/>
</dbReference>
<dbReference type="SUPFAM" id="SSF52402">
    <property type="entry name" value="Adenine nucleotide alpha hydrolases-like"/>
    <property type="match status" value="1"/>
</dbReference>
<dbReference type="SUPFAM" id="SSF69864">
    <property type="entry name" value="Argininosuccinate synthetase, C-terminal domain"/>
    <property type="match status" value="1"/>
</dbReference>
<dbReference type="PROSITE" id="PS00564">
    <property type="entry name" value="ARGININOSUCCIN_SYN_1"/>
    <property type="match status" value="1"/>
</dbReference>
<dbReference type="PROSITE" id="PS00565">
    <property type="entry name" value="ARGININOSUCCIN_SYN_2"/>
    <property type="match status" value="1"/>
</dbReference>
<reference key="1">
    <citation type="journal article" date="2000" name="Nature">
        <title>DNA sequence of both chromosomes of the cholera pathogen Vibrio cholerae.</title>
        <authorList>
            <person name="Heidelberg J.F."/>
            <person name="Eisen J.A."/>
            <person name="Nelson W.C."/>
            <person name="Clayton R.A."/>
            <person name="Gwinn M.L."/>
            <person name="Dodson R.J."/>
            <person name="Haft D.H."/>
            <person name="Hickey E.K."/>
            <person name="Peterson J.D."/>
            <person name="Umayam L.A."/>
            <person name="Gill S.R."/>
            <person name="Nelson K.E."/>
            <person name="Read T.D."/>
            <person name="Tettelin H."/>
            <person name="Richardson D.L."/>
            <person name="Ermolaeva M.D."/>
            <person name="Vamathevan J.J."/>
            <person name="Bass S."/>
            <person name="Qin H."/>
            <person name="Dragoi I."/>
            <person name="Sellers P."/>
            <person name="McDonald L.A."/>
            <person name="Utterback T.R."/>
            <person name="Fleischmann R.D."/>
            <person name="Nierman W.C."/>
            <person name="White O."/>
            <person name="Salzberg S.L."/>
            <person name="Smith H.O."/>
            <person name="Colwell R.R."/>
            <person name="Mekalanos J.J."/>
            <person name="Venter J.C."/>
            <person name="Fraser C.M."/>
        </authorList>
    </citation>
    <scope>NUCLEOTIDE SEQUENCE [LARGE SCALE GENOMIC DNA]</scope>
    <source>
        <strain>ATCC 39315 / El Tor Inaba N16961</strain>
    </source>
</reference>
<comment type="catalytic activity">
    <reaction evidence="1">
        <text>L-citrulline + L-aspartate + ATP = 2-(N(omega)-L-arginino)succinate + AMP + diphosphate + H(+)</text>
        <dbReference type="Rhea" id="RHEA:10932"/>
        <dbReference type="ChEBI" id="CHEBI:15378"/>
        <dbReference type="ChEBI" id="CHEBI:29991"/>
        <dbReference type="ChEBI" id="CHEBI:30616"/>
        <dbReference type="ChEBI" id="CHEBI:33019"/>
        <dbReference type="ChEBI" id="CHEBI:57472"/>
        <dbReference type="ChEBI" id="CHEBI:57743"/>
        <dbReference type="ChEBI" id="CHEBI:456215"/>
        <dbReference type="EC" id="6.3.4.5"/>
    </reaction>
</comment>
<comment type="pathway">
    <text evidence="1">Amino-acid biosynthesis; L-arginine biosynthesis; L-arginine from L-ornithine and carbamoyl phosphate: step 2/3.</text>
</comment>
<comment type="subunit">
    <text evidence="1">Homotetramer.</text>
</comment>
<comment type="subcellular location">
    <subcellularLocation>
        <location evidence="1">Cytoplasm</location>
    </subcellularLocation>
</comment>
<comment type="similarity">
    <text evidence="1">Belongs to the argininosuccinate synthase family. Type 1 subfamily.</text>
</comment>
<evidence type="ECO:0000255" key="1">
    <source>
        <dbReference type="HAMAP-Rule" id="MF_00005"/>
    </source>
</evidence>